<feature type="chain" id="PRO_0000208297" description="Glutamyl-Q tRNA(Asp) synthetase">
    <location>
        <begin position="1"/>
        <end position="295"/>
    </location>
</feature>
<feature type="short sequence motif" description="'HIGH' region">
    <location>
        <begin position="9"/>
        <end position="19"/>
    </location>
</feature>
<feature type="short sequence motif" description="'KMSKS' region">
    <location>
        <begin position="233"/>
        <end position="237"/>
    </location>
</feature>
<feature type="binding site" evidence="1">
    <location>
        <begin position="6"/>
        <end position="10"/>
    </location>
    <ligand>
        <name>L-glutamate</name>
        <dbReference type="ChEBI" id="CHEBI:29985"/>
    </ligand>
</feature>
<feature type="binding site" evidence="1">
    <location>
        <position position="42"/>
    </location>
    <ligand>
        <name>L-glutamate</name>
        <dbReference type="ChEBI" id="CHEBI:29985"/>
    </ligand>
</feature>
<feature type="binding site" evidence="1">
    <location>
        <position position="93"/>
    </location>
    <ligand>
        <name>Zn(2+)</name>
        <dbReference type="ChEBI" id="CHEBI:29105"/>
    </ligand>
</feature>
<feature type="binding site" evidence="1">
    <location>
        <position position="95"/>
    </location>
    <ligand>
        <name>Zn(2+)</name>
        <dbReference type="ChEBI" id="CHEBI:29105"/>
    </ligand>
</feature>
<feature type="binding site" evidence="1">
    <location>
        <position position="118"/>
    </location>
    <ligand>
        <name>Zn(2+)</name>
        <dbReference type="ChEBI" id="CHEBI:29105"/>
    </ligand>
</feature>
<feature type="binding site" evidence="1">
    <location>
        <position position="122"/>
    </location>
    <ligand>
        <name>Zn(2+)</name>
        <dbReference type="ChEBI" id="CHEBI:29105"/>
    </ligand>
</feature>
<feature type="binding site" evidence="1">
    <location>
        <position position="177"/>
    </location>
    <ligand>
        <name>L-glutamate</name>
        <dbReference type="ChEBI" id="CHEBI:29985"/>
    </ligand>
</feature>
<feature type="binding site" evidence="1">
    <location>
        <position position="195"/>
    </location>
    <ligand>
        <name>L-glutamate</name>
        <dbReference type="ChEBI" id="CHEBI:29985"/>
    </ligand>
</feature>
<feature type="binding site" evidence="1">
    <location>
        <position position="236"/>
    </location>
    <ligand>
        <name>ATP</name>
        <dbReference type="ChEBI" id="CHEBI:30616"/>
    </ligand>
</feature>
<keyword id="KW-0030">Aminoacyl-tRNA synthetase</keyword>
<keyword id="KW-0067">ATP-binding</keyword>
<keyword id="KW-0436">Ligase</keyword>
<keyword id="KW-0479">Metal-binding</keyword>
<keyword id="KW-0547">Nucleotide-binding</keyword>
<keyword id="KW-1185">Reference proteome</keyword>
<keyword id="KW-0862">Zinc</keyword>
<organism>
    <name type="scientific">Deinococcus radiodurans (strain ATCC 13939 / DSM 20539 / JCM 16871 / CCUG 27074 / LMG 4051 / NBRC 15346 / NCIMB 9279 / VKM B-1422 / R1)</name>
    <dbReference type="NCBI Taxonomy" id="243230"/>
    <lineage>
        <taxon>Bacteria</taxon>
        <taxon>Thermotogati</taxon>
        <taxon>Deinococcota</taxon>
        <taxon>Deinococci</taxon>
        <taxon>Deinococcales</taxon>
        <taxon>Deinococcaceae</taxon>
        <taxon>Deinococcus</taxon>
    </lineage>
</organism>
<evidence type="ECO:0000255" key="1">
    <source>
        <dbReference type="HAMAP-Rule" id="MF_01428"/>
    </source>
</evidence>
<proteinExistence type="inferred from homology"/>
<reference key="1">
    <citation type="journal article" date="1999" name="Science">
        <title>Genome sequence of the radioresistant bacterium Deinococcus radiodurans R1.</title>
        <authorList>
            <person name="White O."/>
            <person name="Eisen J.A."/>
            <person name="Heidelberg J.F."/>
            <person name="Hickey E.K."/>
            <person name="Peterson J.D."/>
            <person name="Dodson R.J."/>
            <person name="Haft D.H."/>
            <person name="Gwinn M.L."/>
            <person name="Nelson W.C."/>
            <person name="Richardson D.L."/>
            <person name="Moffat K.S."/>
            <person name="Qin H."/>
            <person name="Jiang L."/>
            <person name="Pamphile W."/>
            <person name="Crosby M."/>
            <person name="Shen M."/>
            <person name="Vamathevan J.J."/>
            <person name="Lam P."/>
            <person name="McDonald L.A."/>
            <person name="Utterback T.R."/>
            <person name="Zalewski C."/>
            <person name="Makarova K.S."/>
            <person name="Aravind L."/>
            <person name="Daly M.J."/>
            <person name="Minton K.W."/>
            <person name="Fleischmann R.D."/>
            <person name="Ketchum K.A."/>
            <person name="Nelson K.E."/>
            <person name="Salzberg S.L."/>
            <person name="Smith H.O."/>
            <person name="Venter J.C."/>
            <person name="Fraser C.M."/>
        </authorList>
    </citation>
    <scope>NUCLEOTIDE SEQUENCE [LARGE SCALE GENOMIC DNA]</scope>
    <source>
        <strain>ATCC 13939 / DSM 20539 / JCM 16871 / CCUG 27074 / LMG 4051 / NBRC 15346 / NCIMB 9279 / VKM B-1422 / R1</strain>
    </source>
</reference>
<comment type="function">
    <text evidence="1">Catalyzes the tRNA-independent activation of glutamate in presence of ATP and the subsequent transfer of glutamate onto a tRNA(Asp). Glutamate is transferred on the 2-amino-5-(4,5-dihydroxy-2-cyclopenten-1-yl) moiety of the queuosine in the wobble position of the QUC anticodon.</text>
</comment>
<comment type="cofactor">
    <cofactor evidence="1">
        <name>Zn(2+)</name>
        <dbReference type="ChEBI" id="CHEBI:29105"/>
    </cofactor>
    <text evidence="1">Binds 1 zinc ion per subunit.</text>
</comment>
<comment type="similarity">
    <text evidence="1">Belongs to the class-I aminoacyl-tRNA synthetase family. GluQ subfamily.</text>
</comment>
<gene>
    <name evidence="1" type="primary">gluQ</name>
    <name type="ordered locus">DR_1687</name>
</gene>
<accession>Q9RTR9</accession>
<protein>
    <recommendedName>
        <fullName evidence="1">Glutamyl-Q tRNA(Asp) synthetase</fullName>
        <shortName evidence="1">Glu-Q-RSs</shortName>
        <ecNumber evidence="1">6.1.1.-</ecNumber>
    </recommendedName>
</protein>
<sequence>MTVTGRFAPSPTGAMHLGNARTALLAWLHSRALGGRHLLRFEDLDTGRVRGWAYDLTRRDLEWLGLDWDEEFRQSERLDLYAAALAGLDTYPCTCTRKEVLAAIADSAGAPHGEEAVYPGTCRPGSVHPERPAARRWRVPEAESCVTDALSGDTLCQWLPRDVGDFVLQRNDGVYAYHLAVVVDDALMGVTDVLRGADLWTASPRQAALHRALGFTPPRFLHVPLLSNYRGERLAKRGGAPPLSEWREHGEAPGRVLADLAHTLPWPGFQAVPEEVTAPELLPLWGDVLAERPGT</sequence>
<name>GLUQ_DEIRA</name>
<dbReference type="EC" id="6.1.1.-" evidence="1"/>
<dbReference type="EMBL" id="AE000513">
    <property type="protein sequence ID" value="AAF11243.1"/>
    <property type="molecule type" value="Genomic_DNA"/>
</dbReference>
<dbReference type="PIR" id="E75366">
    <property type="entry name" value="E75366"/>
</dbReference>
<dbReference type="RefSeq" id="NP_295410.1">
    <property type="nucleotide sequence ID" value="NC_001263.1"/>
</dbReference>
<dbReference type="RefSeq" id="WP_010888322.1">
    <property type="nucleotide sequence ID" value="NC_001263.1"/>
</dbReference>
<dbReference type="SMR" id="Q9RTR9"/>
<dbReference type="STRING" id="243230.DR_1687"/>
<dbReference type="PaxDb" id="243230-DR_1687"/>
<dbReference type="EnsemblBacteria" id="AAF11243">
    <property type="protein sequence ID" value="AAF11243"/>
    <property type="gene ID" value="DR_1687"/>
</dbReference>
<dbReference type="GeneID" id="69517923"/>
<dbReference type="KEGG" id="dra:DR_1687"/>
<dbReference type="PATRIC" id="fig|243230.17.peg.1896"/>
<dbReference type="eggNOG" id="COG0008">
    <property type="taxonomic scope" value="Bacteria"/>
</dbReference>
<dbReference type="HOGENOM" id="CLU_015768_0_0_0"/>
<dbReference type="InParanoid" id="Q9RTR9"/>
<dbReference type="OrthoDB" id="9807503at2"/>
<dbReference type="Proteomes" id="UP000002524">
    <property type="component" value="Chromosome 1"/>
</dbReference>
<dbReference type="GO" id="GO:0005829">
    <property type="term" value="C:cytosol"/>
    <property type="evidence" value="ECO:0000318"/>
    <property type="project" value="GO_Central"/>
</dbReference>
<dbReference type="GO" id="GO:0005524">
    <property type="term" value="F:ATP binding"/>
    <property type="evidence" value="ECO:0007669"/>
    <property type="project" value="UniProtKB-KW"/>
</dbReference>
<dbReference type="GO" id="GO:0004818">
    <property type="term" value="F:glutamate-tRNA ligase activity"/>
    <property type="evidence" value="ECO:0000318"/>
    <property type="project" value="GO_Central"/>
</dbReference>
<dbReference type="GO" id="GO:0008270">
    <property type="term" value="F:zinc ion binding"/>
    <property type="evidence" value="ECO:0007669"/>
    <property type="project" value="UniProtKB-UniRule"/>
</dbReference>
<dbReference type="GO" id="GO:0006424">
    <property type="term" value="P:glutamyl-tRNA aminoacylation"/>
    <property type="evidence" value="ECO:0000318"/>
    <property type="project" value="GO_Central"/>
</dbReference>
<dbReference type="GO" id="GO:0006400">
    <property type="term" value="P:tRNA modification"/>
    <property type="evidence" value="ECO:0007669"/>
    <property type="project" value="InterPro"/>
</dbReference>
<dbReference type="FunFam" id="3.40.50.620:FF:000093">
    <property type="entry name" value="Glutamyl-Q tRNA(Asp) synthetase"/>
    <property type="match status" value="1"/>
</dbReference>
<dbReference type="Gene3D" id="3.40.50.620">
    <property type="entry name" value="HUPs"/>
    <property type="match status" value="1"/>
</dbReference>
<dbReference type="HAMAP" id="MF_01428">
    <property type="entry name" value="Glu_Q_tRNA_synth"/>
    <property type="match status" value="1"/>
</dbReference>
<dbReference type="InterPro" id="IPR001412">
    <property type="entry name" value="aa-tRNA-synth_I_CS"/>
</dbReference>
<dbReference type="InterPro" id="IPR022380">
    <property type="entry name" value="Glu-Q_tRNA(Asp)_Synthase"/>
</dbReference>
<dbReference type="InterPro" id="IPR000924">
    <property type="entry name" value="Glu/Gln-tRNA-synth"/>
</dbReference>
<dbReference type="InterPro" id="IPR020058">
    <property type="entry name" value="Glu/Gln-tRNA-synth_Ib_cat-dom"/>
</dbReference>
<dbReference type="InterPro" id="IPR049940">
    <property type="entry name" value="GluQ/Sye"/>
</dbReference>
<dbReference type="InterPro" id="IPR014729">
    <property type="entry name" value="Rossmann-like_a/b/a_fold"/>
</dbReference>
<dbReference type="NCBIfam" id="NF004314">
    <property type="entry name" value="PRK05710.1-3"/>
    <property type="match status" value="1"/>
</dbReference>
<dbReference type="NCBIfam" id="NF004315">
    <property type="entry name" value="PRK05710.1-4"/>
    <property type="match status" value="1"/>
</dbReference>
<dbReference type="NCBIfam" id="TIGR03838">
    <property type="entry name" value="queuosine_YadB"/>
    <property type="match status" value="1"/>
</dbReference>
<dbReference type="PANTHER" id="PTHR43311">
    <property type="entry name" value="GLUTAMATE--TRNA LIGASE"/>
    <property type="match status" value="1"/>
</dbReference>
<dbReference type="PANTHER" id="PTHR43311:SF1">
    <property type="entry name" value="GLUTAMYL-Q TRNA(ASP) SYNTHETASE"/>
    <property type="match status" value="1"/>
</dbReference>
<dbReference type="Pfam" id="PF00749">
    <property type="entry name" value="tRNA-synt_1c"/>
    <property type="match status" value="1"/>
</dbReference>
<dbReference type="PRINTS" id="PR00987">
    <property type="entry name" value="TRNASYNTHGLU"/>
</dbReference>
<dbReference type="SUPFAM" id="SSF52374">
    <property type="entry name" value="Nucleotidylyl transferase"/>
    <property type="match status" value="1"/>
</dbReference>
<dbReference type="PROSITE" id="PS00178">
    <property type="entry name" value="AA_TRNA_LIGASE_I"/>
    <property type="match status" value="1"/>
</dbReference>